<reference key="1">
    <citation type="journal article" date="2008" name="PLoS ONE">
        <title>Genome sequence of Brucella abortus vaccine strain S19 compared to virulent strains yields candidate virulence genes.</title>
        <authorList>
            <person name="Crasta O.R."/>
            <person name="Folkerts O."/>
            <person name="Fei Z."/>
            <person name="Mane S.P."/>
            <person name="Evans C."/>
            <person name="Martino-Catt S."/>
            <person name="Bricker B."/>
            <person name="Yu G."/>
            <person name="Du L."/>
            <person name="Sobral B.W."/>
        </authorList>
    </citation>
    <scope>NUCLEOTIDE SEQUENCE [LARGE SCALE GENOMIC DNA]</scope>
    <source>
        <strain>S19</strain>
    </source>
</reference>
<proteinExistence type="inferred from homology"/>
<feature type="chain" id="PRO_1000127662" description="UDP-3-O-acylglucosamine N-acyltransferase">
    <location>
        <begin position="1"/>
        <end position="351"/>
    </location>
</feature>
<feature type="active site" description="Proton acceptor" evidence="1">
    <location>
        <position position="257"/>
    </location>
</feature>
<organism>
    <name type="scientific">Brucella abortus (strain S19)</name>
    <dbReference type="NCBI Taxonomy" id="430066"/>
    <lineage>
        <taxon>Bacteria</taxon>
        <taxon>Pseudomonadati</taxon>
        <taxon>Pseudomonadota</taxon>
        <taxon>Alphaproteobacteria</taxon>
        <taxon>Hyphomicrobiales</taxon>
        <taxon>Brucellaceae</taxon>
        <taxon>Brucella/Ochrobactrum group</taxon>
        <taxon>Brucella</taxon>
    </lineage>
</organism>
<keyword id="KW-0012">Acyltransferase</keyword>
<keyword id="KW-0441">Lipid A biosynthesis</keyword>
<keyword id="KW-0444">Lipid biosynthesis</keyword>
<keyword id="KW-0443">Lipid metabolism</keyword>
<keyword id="KW-0677">Repeat</keyword>
<keyword id="KW-0808">Transferase</keyword>
<dbReference type="EC" id="2.3.1.191" evidence="1"/>
<dbReference type="EMBL" id="CP000887">
    <property type="protein sequence ID" value="ACD72600.1"/>
    <property type="molecule type" value="Genomic_DNA"/>
</dbReference>
<dbReference type="RefSeq" id="WP_002964281.1">
    <property type="nucleotide sequence ID" value="NC_010742.1"/>
</dbReference>
<dbReference type="SMR" id="B2S603"/>
<dbReference type="GeneID" id="97533596"/>
<dbReference type="KEGG" id="bmc:BAbS19_I10930"/>
<dbReference type="HOGENOM" id="CLU_049865_0_2_5"/>
<dbReference type="UniPathway" id="UPA00973"/>
<dbReference type="Proteomes" id="UP000002565">
    <property type="component" value="Chromosome 1"/>
</dbReference>
<dbReference type="GO" id="GO:0016020">
    <property type="term" value="C:membrane"/>
    <property type="evidence" value="ECO:0007669"/>
    <property type="project" value="GOC"/>
</dbReference>
<dbReference type="GO" id="GO:0016410">
    <property type="term" value="F:N-acyltransferase activity"/>
    <property type="evidence" value="ECO:0007669"/>
    <property type="project" value="InterPro"/>
</dbReference>
<dbReference type="GO" id="GO:0009245">
    <property type="term" value="P:lipid A biosynthetic process"/>
    <property type="evidence" value="ECO:0007669"/>
    <property type="project" value="UniProtKB-UniRule"/>
</dbReference>
<dbReference type="CDD" id="cd03352">
    <property type="entry name" value="LbH_LpxD"/>
    <property type="match status" value="1"/>
</dbReference>
<dbReference type="Gene3D" id="2.160.10.10">
    <property type="entry name" value="Hexapeptide repeat proteins"/>
    <property type="match status" value="1"/>
</dbReference>
<dbReference type="Gene3D" id="3.40.1390.10">
    <property type="entry name" value="MurE/MurF, N-terminal domain"/>
    <property type="match status" value="1"/>
</dbReference>
<dbReference type="HAMAP" id="MF_00523">
    <property type="entry name" value="LpxD"/>
    <property type="match status" value="1"/>
</dbReference>
<dbReference type="InterPro" id="IPR001451">
    <property type="entry name" value="Hexapep"/>
</dbReference>
<dbReference type="InterPro" id="IPR018357">
    <property type="entry name" value="Hexapep_transf_CS"/>
</dbReference>
<dbReference type="InterPro" id="IPR007691">
    <property type="entry name" value="LpxD"/>
</dbReference>
<dbReference type="InterPro" id="IPR011004">
    <property type="entry name" value="Trimer_LpxA-like_sf"/>
</dbReference>
<dbReference type="InterPro" id="IPR020573">
    <property type="entry name" value="UDP_GlcNAc_AcTrfase_non-rep"/>
</dbReference>
<dbReference type="NCBIfam" id="TIGR01853">
    <property type="entry name" value="lipid_A_lpxD"/>
    <property type="match status" value="1"/>
</dbReference>
<dbReference type="NCBIfam" id="NF002060">
    <property type="entry name" value="PRK00892.1"/>
    <property type="match status" value="1"/>
</dbReference>
<dbReference type="PANTHER" id="PTHR43378">
    <property type="entry name" value="UDP-3-O-ACYLGLUCOSAMINE N-ACYLTRANSFERASE"/>
    <property type="match status" value="1"/>
</dbReference>
<dbReference type="PANTHER" id="PTHR43378:SF2">
    <property type="entry name" value="UDP-3-O-ACYLGLUCOSAMINE N-ACYLTRANSFERASE 1, MITOCHONDRIAL-RELATED"/>
    <property type="match status" value="1"/>
</dbReference>
<dbReference type="Pfam" id="PF00132">
    <property type="entry name" value="Hexapep"/>
    <property type="match status" value="2"/>
</dbReference>
<dbReference type="Pfam" id="PF04613">
    <property type="entry name" value="LpxD"/>
    <property type="match status" value="1"/>
</dbReference>
<dbReference type="SUPFAM" id="SSF51161">
    <property type="entry name" value="Trimeric LpxA-like enzymes"/>
    <property type="match status" value="1"/>
</dbReference>
<dbReference type="PROSITE" id="PS00101">
    <property type="entry name" value="HEXAPEP_TRANSFERASES"/>
    <property type="match status" value="1"/>
</dbReference>
<sequence length="351" mass="36357">MADPIFFKPSRELTIGDVADFTGASLRDPKLAPRSVERLASLKDAGEGALVFVEGKKNVSSLVGLKAAGVLCTESLADSVPSGIAVLVSRHPHRDFSAVGRMLFPASVRPESWLGETGISPAAFIHPTAQIEDGATVEAGAVIGSGVTIGAGTLIAATAVIGQNCQIGRNSYIAPGVSVQCAFIGNNVSLHPGVRIGQDGFGYVPGAAGLDKVPQLGRVIIQDNVEIGANTTVDRGSLDDTVIGEGTKIDNLVQIAHNVRIGRFCLVAAHCGISGSCVIGDQTMLGGRVGLADHLIIGSRVQVAAASGVMNDIPDGERWGGIPARPIKQWFRDIANIRSIGQSRKDASSDE</sequence>
<name>LPXD_BRUA1</name>
<gene>
    <name evidence="1" type="primary">lpxD</name>
    <name type="ordered locus">BAbS19_I10930</name>
</gene>
<accession>B2S603</accession>
<comment type="function">
    <text evidence="1">Catalyzes the N-acylation of UDP-3-O-acylglucosamine using 3-hydroxyacyl-ACP as the acyl donor. Is involved in the biosynthesis of lipid A, a phosphorylated glycolipid that anchors the lipopolysaccharide to the outer membrane of the cell.</text>
</comment>
<comment type="catalytic activity">
    <reaction evidence="1">
        <text>a UDP-3-O-[(3R)-3-hydroxyacyl]-alpha-D-glucosamine + a (3R)-hydroxyacyl-[ACP] = a UDP-2-N,3-O-bis[(3R)-3-hydroxyacyl]-alpha-D-glucosamine + holo-[ACP] + H(+)</text>
        <dbReference type="Rhea" id="RHEA:53836"/>
        <dbReference type="Rhea" id="RHEA-COMP:9685"/>
        <dbReference type="Rhea" id="RHEA-COMP:9945"/>
        <dbReference type="ChEBI" id="CHEBI:15378"/>
        <dbReference type="ChEBI" id="CHEBI:64479"/>
        <dbReference type="ChEBI" id="CHEBI:78827"/>
        <dbReference type="ChEBI" id="CHEBI:137740"/>
        <dbReference type="ChEBI" id="CHEBI:137748"/>
        <dbReference type="EC" id="2.3.1.191"/>
    </reaction>
</comment>
<comment type="pathway">
    <text evidence="1">Bacterial outer membrane biogenesis; LPS lipid A biosynthesis.</text>
</comment>
<comment type="subunit">
    <text evidence="1">Homotrimer.</text>
</comment>
<comment type="similarity">
    <text evidence="1">Belongs to the transferase hexapeptide repeat family. LpxD subfamily.</text>
</comment>
<protein>
    <recommendedName>
        <fullName evidence="1">UDP-3-O-acylglucosamine N-acyltransferase</fullName>
        <ecNumber evidence="1">2.3.1.191</ecNumber>
    </recommendedName>
</protein>
<evidence type="ECO:0000255" key="1">
    <source>
        <dbReference type="HAMAP-Rule" id="MF_00523"/>
    </source>
</evidence>